<name>PTH_AYWBP</name>
<gene>
    <name evidence="1" type="primary">pth</name>
    <name type="ordered locus">AYWB_567</name>
</gene>
<feature type="chain" id="PRO_0000264005" description="Peptidyl-tRNA hydrolase">
    <location>
        <begin position="1"/>
        <end position="188"/>
    </location>
</feature>
<feature type="active site" description="Proton acceptor" evidence="1">
    <location>
        <position position="19"/>
    </location>
</feature>
<feature type="binding site" evidence="1">
    <location>
        <position position="14"/>
    </location>
    <ligand>
        <name>tRNA</name>
        <dbReference type="ChEBI" id="CHEBI:17843"/>
    </ligand>
</feature>
<feature type="binding site" evidence="1">
    <location>
        <position position="64"/>
    </location>
    <ligand>
        <name>tRNA</name>
        <dbReference type="ChEBI" id="CHEBI:17843"/>
    </ligand>
</feature>
<feature type="binding site" evidence="1">
    <location>
        <position position="66"/>
    </location>
    <ligand>
        <name>tRNA</name>
        <dbReference type="ChEBI" id="CHEBI:17843"/>
    </ligand>
</feature>
<feature type="binding site" evidence="1">
    <location>
        <position position="112"/>
    </location>
    <ligand>
        <name>tRNA</name>
        <dbReference type="ChEBI" id="CHEBI:17843"/>
    </ligand>
</feature>
<feature type="site" description="Discriminates between blocked and unblocked aminoacyl-tRNA" evidence="1">
    <location>
        <position position="9"/>
    </location>
</feature>
<feature type="site" description="Stabilizes the basic form of H active site to accept a proton" evidence="1">
    <location>
        <position position="91"/>
    </location>
</feature>
<dbReference type="EC" id="3.1.1.29" evidence="1"/>
<dbReference type="EMBL" id="CP000061">
    <property type="protein sequence ID" value="ABC65684.1"/>
    <property type="molecule type" value="Genomic_DNA"/>
</dbReference>
<dbReference type="RefSeq" id="WP_011412846.1">
    <property type="nucleotide sequence ID" value="NC_007716.1"/>
</dbReference>
<dbReference type="SMR" id="Q2NIQ9"/>
<dbReference type="STRING" id="322098.AYWB_567"/>
<dbReference type="KEGG" id="ayw:AYWB_567"/>
<dbReference type="eggNOG" id="COG0193">
    <property type="taxonomic scope" value="Bacteria"/>
</dbReference>
<dbReference type="HOGENOM" id="CLU_062456_4_1_14"/>
<dbReference type="OrthoDB" id="9800507at2"/>
<dbReference type="PhylomeDB" id="Q2NIQ9"/>
<dbReference type="Proteomes" id="UP000001934">
    <property type="component" value="Chromosome"/>
</dbReference>
<dbReference type="GO" id="GO:0005737">
    <property type="term" value="C:cytoplasm"/>
    <property type="evidence" value="ECO:0007669"/>
    <property type="project" value="UniProtKB-SubCell"/>
</dbReference>
<dbReference type="GO" id="GO:0004045">
    <property type="term" value="F:peptidyl-tRNA hydrolase activity"/>
    <property type="evidence" value="ECO:0007669"/>
    <property type="project" value="UniProtKB-UniRule"/>
</dbReference>
<dbReference type="GO" id="GO:0000049">
    <property type="term" value="F:tRNA binding"/>
    <property type="evidence" value="ECO:0007669"/>
    <property type="project" value="UniProtKB-UniRule"/>
</dbReference>
<dbReference type="GO" id="GO:0006515">
    <property type="term" value="P:protein quality control for misfolded or incompletely synthesized proteins"/>
    <property type="evidence" value="ECO:0007669"/>
    <property type="project" value="UniProtKB-UniRule"/>
</dbReference>
<dbReference type="GO" id="GO:0072344">
    <property type="term" value="P:rescue of stalled ribosome"/>
    <property type="evidence" value="ECO:0007669"/>
    <property type="project" value="UniProtKB-UniRule"/>
</dbReference>
<dbReference type="CDD" id="cd00462">
    <property type="entry name" value="PTH"/>
    <property type="match status" value="1"/>
</dbReference>
<dbReference type="FunFam" id="3.40.50.1470:FF:000001">
    <property type="entry name" value="Peptidyl-tRNA hydrolase"/>
    <property type="match status" value="1"/>
</dbReference>
<dbReference type="Gene3D" id="3.40.50.1470">
    <property type="entry name" value="Peptidyl-tRNA hydrolase"/>
    <property type="match status" value="1"/>
</dbReference>
<dbReference type="HAMAP" id="MF_00083">
    <property type="entry name" value="Pept_tRNA_hydro_bact"/>
    <property type="match status" value="1"/>
</dbReference>
<dbReference type="InterPro" id="IPR001328">
    <property type="entry name" value="Pept_tRNA_hydro"/>
</dbReference>
<dbReference type="InterPro" id="IPR018171">
    <property type="entry name" value="Pept_tRNA_hydro_CS"/>
</dbReference>
<dbReference type="InterPro" id="IPR036416">
    <property type="entry name" value="Pept_tRNA_hydro_sf"/>
</dbReference>
<dbReference type="NCBIfam" id="TIGR00447">
    <property type="entry name" value="pth"/>
    <property type="match status" value="1"/>
</dbReference>
<dbReference type="PANTHER" id="PTHR17224">
    <property type="entry name" value="PEPTIDYL-TRNA HYDROLASE"/>
    <property type="match status" value="1"/>
</dbReference>
<dbReference type="PANTHER" id="PTHR17224:SF1">
    <property type="entry name" value="PEPTIDYL-TRNA HYDROLASE"/>
    <property type="match status" value="1"/>
</dbReference>
<dbReference type="Pfam" id="PF01195">
    <property type="entry name" value="Pept_tRNA_hydro"/>
    <property type="match status" value="1"/>
</dbReference>
<dbReference type="SUPFAM" id="SSF53178">
    <property type="entry name" value="Peptidyl-tRNA hydrolase-like"/>
    <property type="match status" value="1"/>
</dbReference>
<dbReference type="PROSITE" id="PS01195">
    <property type="entry name" value="PEPT_TRNA_HYDROL_1"/>
    <property type="match status" value="1"/>
</dbReference>
<dbReference type="PROSITE" id="PS01196">
    <property type="entry name" value="PEPT_TRNA_HYDROL_2"/>
    <property type="match status" value="1"/>
</dbReference>
<comment type="function">
    <text evidence="1">Hydrolyzes ribosome-free peptidyl-tRNAs (with 1 or more amino acids incorporated), which drop off the ribosome during protein synthesis, or as a result of ribosome stalling.</text>
</comment>
<comment type="function">
    <text evidence="1">Catalyzes the release of premature peptidyl moieties from peptidyl-tRNA molecules trapped in stalled 50S ribosomal subunits, and thus maintains levels of free tRNAs and 50S ribosomes.</text>
</comment>
<comment type="catalytic activity">
    <reaction evidence="1">
        <text>an N-acyl-L-alpha-aminoacyl-tRNA + H2O = an N-acyl-L-amino acid + a tRNA + H(+)</text>
        <dbReference type="Rhea" id="RHEA:54448"/>
        <dbReference type="Rhea" id="RHEA-COMP:10123"/>
        <dbReference type="Rhea" id="RHEA-COMP:13883"/>
        <dbReference type="ChEBI" id="CHEBI:15377"/>
        <dbReference type="ChEBI" id="CHEBI:15378"/>
        <dbReference type="ChEBI" id="CHEBI:59874"/>
        <dbReference type="ChEBI" id="CHEBI:78442"/>
        <dbReference type="ChEBI" id="CHEBI:138191"/>
        <dbReference type="EC" id="3.1.1.29"/>
    </reaction>
</comment>
<comment type="subunit">
    <text evidence="1">Monomer.</text>
</comment>
<comment type="subcellular location">
    <subcellularLocation>
        <location evidence="1">Cytoplasm</location>
    </subcellularLocation>
</comment>
<comment type="similarity">
    <text evidence="1">Belongs to the PTH family.</text>
</comment>
<evidence type="ECO:0000255" key="1">
    <source>
        <dbReference type="HAMAP-Rule" id="MF_00083"/>
    </source>
</evidence>
<organism>
    <name type="scientific">Aster yellows witches'-broom phytoplasma (strain AYWB)</name>
    <dbReference type="NCBI Taxonomy" id="322098"/>
    <lineage>
        <taxon>Bacteria</taxon>
        <taxon>Bacillati</taxon>
        <taxon>Mycoplasmatota</taxon>
        <taxon>Mollicutes</taxon>
        <taxon>Acholeplasmatales</taxon>
        <taxon>Acholeplasmataceae</taxon>
        <taxon>Candidatus Phytoplasma</taxon>
        <taxon>16SrI (Aster yellows group)</taxon>
    </lineage>
</organism>
<sequence>MKLIVGLGNPGKKFLNTRHNIGFVVVDSFLSQNKYQTLKEDTNAHIYQINFNNHQTLLIKPQTYMNLSGEVVKKIINKYRIKIENILVIVDDIYLDEGKLKLKMQGGHGGHNGLRNIIDRLCTKQFKRLKIGVSLDSCMPLDQYLLTPVNASSQKNILKNIDIINKIIFNFIQDVDFNILMNGYNSKH</sequence>
<reference key="1">
    <citation type="journal article" date="2006" name="J. Bacteriol.">
        <title>Living with genome instability: the adaptation of phytoplasmas to diverse environments of their insect and plant hosts.</title>
        <authorList>
            <person name="Bai X."/>
            <person name="Zhang J."/>
            <person name="Ewing A."/>
            <person name="Miller S.A."/>
            <person name="Jancso Radek A."/>
            <person name="Shevchenko D.V."/>
            <person name="Tsukerman K."/>
            <person name="Walunas T."/>
            <person name="Lapidus A."/>
            <person name="Campbell J.W."/>
            <person name="Hogenhout S.A."/>
        </authorList>
    </citation>
    <scope>NUCLEOTIDE SEQUENCE [LARGE SCALE GENOMIC DNA]</scope>
    <source>
        <strain>AYWB</strain>
    </source>
</reference>
<keyword id="KW-0963">Cytoplasm</keyword>
<keyword id="KW-0378">Hydrolase</keyword>
<keyword id="KW-0694">RNA-binding</keyword>
<keyword id="KW-0820">tRNA-binding</keyword>
<accession>Q2NIQ9</accession>
<protein>
    <recommendedName>
        <fullName evidence="1">Peptidyl-tRNA hydrolase</fullName>
        <shortName evidence="1">Pth</shortName>
        <ecNumber evidence="1">3.1.1.29</ecNumber>
    </recommendedName>
</protein>
<proteinExistence type="inferred from homology"/>